<protein>
    <recommendedName>
        <fullName evidence="1">Glucans biosynthesis protein C</fullName>
        <ecNumber evidence="1">2.1.-.-</ecNumber>
    </recommendedName>
</protein>
<gene>
    <name evidence="1" type="primary">mdoC</name>
    <name evidence="1" type="synonym">opgC</name>
    <name type="ordered locus">SeSA_A1216</name>
</gene>
<name>OPGC_SALSV</name>
<feature type="chain" id="PRO_1000136577" description="Glucans biosynthesis protein C">
    <location>
        <begin position="1"/>
        <end position="384"/>
    </location>
</feature>
<feature type="transmembrane region" description="Helical" evidence="1">
    <location>
        <begin position="17"/>
        <end position="37"/>
    </location>
</feature>
<feature type="transmembrane region" description="Helical" evidence="1">
    <location>
        <begin position="54"/>
        <end position="74"/>
    </location>
</feature>
<feature type="transmembrane region" description="Helical" evidence="1">
    <location>
        <begin position="91"/>
        <end position="111"/>
    </location>
</feature>
<feature type="transmembrane region" description="Helical" evidence="1">
    <location>
        <begin position="140"/>
        <end position="160"/>
    </location>
</feature>
<feature type="transmembrane region" description="Helical" evidence="1">
    <location>
        <begin position="173"/>
        <end position="193"/>
    </location>
</feature>
<feature type="transmembrane region" description="Helical" evidence="1">
    <location>
        <begin position="212"/>
        <end position="232"/>
    </location>
</feature>
<feature type="transmembrane region" description="Helical" evidence="1">
    <location>
        <begin position="240"/>
        <end position="260"/>
    </location>
</feature>
<feature type="transmembrane region" description="Helical" evidence="1">
    <location>
        <begin position="274"/>
        <end position="294"/>
    </location>
</feature>
<feature type="transmembrane region" description="Helical" evidence="1">
    <location>
        <begin position="311"/>
        <end position="331"/>
    </location>
</feature>
<feature type="transmembrane region" description="Helical" evidence="1">
    <location>
        <begin position="338"/>
        <end position="358"/>
    </location>
</feature>
<dbReference type="EC" id="2.1.-.-" evidence="1"/>
<dbReference type="EMBL" id="CP001127">
    <property type="protein sequence ID" value="ACF92940.1"/>
    <property type="molecule type" value="Genomic_DNA"/>
</dbReference>
<dbReference type="RefSeq" id="WP_000100058.1">
    <property type="nucleotide sequence ID" value="NC_011094.1"/>
</dbReference>
<dbReference type="KEGG" id="sew:SeSA_A1216"/>
<dbReference type="HOGENOM" id="CLU_036182_2_0_6"/>
<dbReference type="UniPathway" id="UPA00637"/>
<dbReference type="Proteomes" id="UP000001865">
    <property type="component" value="Chromosome"/>
</dbReference>
<dbReference type="GO" id="GO:0005886">
    <property type="term" value="C:plasma membrane"/>
    <property type="evidence" value="ECO:0007669"/>
    <property type="project" value="UniProtKB-SubCell"/>
</dbReference>
<dbReference type="GO" id="GO:0016747">
    <property type="term" value="F:acyltransferase activity, transferring groups other than amino-acyl groups"/>
    <property type="evidence" value="ECO:0007669"/>
    <property type="project" value="InterPro"/>
</dbReference>
<dbReference type="GO" id="GO:0016741">
    <property type="term" value="F:transferase activity, transferring one-carbon groups"/>
    <property type="evidence" value="ECO:0007669"/>
    <property type="project" value="UniProtKB-UniRule"/>
</dbReference>
<dbReference type="GO" id="GO:0009250">
    <property type="term" value="P:glucan biosynthetic process"/>
    <property type="evidence" value="ECO:0007669"/>
    <property type="project" value="UniProtKB-UniRule"/>
</dbReference>
<dbReference type="HAMAP" id="MF_01066">
    <property type="entry name" value="MdoC_OpgC"/>
    <property type="match status" value="1"/>
</dbReference>
<dbReference type="InterPro" id="IPR002656">
    <property type="entry name" value="Acyl_transf_3_dom"/>
</dbReference>
<dbReference type="InterPro" id="IPR050623">
    <property type="entry name" value="Glucan_succinyl_AcylTrfase"/>
</dbReference>
<dbReference type="InterPro" id="IPR023723">
    <property type="entry name" value="Glucans_biosynth_C"/>
</dbReference>
<dbReference type="NCBIfam" id="NF003014">
    <property type="entry name" value="PRK03854.1"/>
    <property type="match status" value="1"/>
</dbReference>
<dbReference type="PANTHER" id="PTHR36927">
    <property type="entry name" value="BLR4337 PROTEIN"/>
    <property type="match status" value="1"/>
</dbReference>
<dbReference type="PANTHER" id="PTHR36927:SF3">
    <property type="entry name" value="GLUCANS BIOSYNTHESIS PROTEIN C"/>
    <property type="match status" value="1"/>
</dbReference>
<dbReference type="Pfam" id="PF01757">
    <property type="entry name" value="Acyl_transf_3"/>
    <property type="match status" value="1"/>
</dbReference>
<comment type="function">
    <text evidence="1">Necessary for the succinyl substitution of periplasmic glucans. Could catalyze the transfer of succinyl residues from the cytoplasmic side of the membrane to the nascent glucan backbones on the periplasmic side of the membrane.</text>
</comment>
<comment type="pathway">
    <text evidence="1">Glycan metabolism; osmoregulated periplasmic glucan (OPG) biosynthesis.</text>
</comment>
<comment type="subcellular location">
    <subcellularLocation>
        <location evidence="1">Cell membrane</location>
        <topology evidence="1">Multi-pass membrane protein</topology>
    </subcellularLocation>
</comment>
<comment type="similarity">
    <text evidence="1">Belongs to the acyltransferase 3 family. OpgC subfamily.</text>
</comment>
<proteinExistence type="inferred from homology"/>
<organism>
    <name type="scientific">Salmonella schwarzengrund (strain CVM19633)</name>
    <dbReference type="NCBI Taxonomy" id="439843"/>
    <lineage>
        <taxon>Bacteria</taxon>
        <taxon>Pseudomonadati</taxon>
        <taxon>Pseudomonadota</taxon>
        <taxon>Gammaproteobacteria</taxon>
        <taxon>Enterobacterales</taxon>
        <taxon>Enterobacteriaceae</taxon>
        <taxon>Salmonella</taxon>
    </lineage>
</organism>
<evidence type="ECO:0000255" key="1">
    <source>
        <dbReference type="HAMAP-Rule" id="MF_01066"/>
    </source>
</evidence>
<keyword id="KW-0012">Acyltransferase</keyword>
<keyword id="KW-1003">Cell membrane</keyword>
<keyword id="KW-0472">Membrane</keyword>
<keyword id="KW-0808">Transferase</keyword>
<keyword id="KW-0812">Transmembrane</keyword>
<keyword id="KW-1133">Transmembrane helix</keyword>
<reference key="1">
    <citation type="journal article" date="2011" name="J. Bacteriol.">
        <title>Comparative genomics of 28 Salmonella enterica isolates: evidence for CRISPR-mediated adaptive sublineage evolution.</title>
        <authorList>
            <person name="Fricke W.F."/>
            <person name="Mammel M.K."/>
            <person name="McDermott P.F."/>
            <person name="Tartera C."/>
            <person name="White D.G."/>
            <person name="Leclerc J.E."/>
            <person name="Ravel J."/>
            <person name="Cebula T.A."/>
        </authorList>
    </citation>
    <scope>NUCLEOTIDE SEQUENCE [LARGE SCALE GENOMIC DNA]</scope>
    <source>
        <strain>CVM19633</strain>
    </source>
</reference>
<sequence>MSSVPAPREYFLDSIRAWLMLLGIPFHISLIYSTHSWHVNSAAPSWWLTLFNDFIHAFRMQVFFVISGYFSYMLFLRYPLKRWWKVRVERVGIPMLTAIPLLTLPQFILLQYVKEKTENWPTLSAYEKYNTLAWELISHLWFLLVLVILTTVSIGIFTWFQKRQETSKPRPAAISLAKLSLIFFLLGIAYAAIRRIIFIVYPAILSDGMFNFIVMQTLFYVPFFILGALAFIHPDLKARFTTPSRGCTLGAAVAFIAYLLNQRYGSGDAWMYETESVITMVMGLWMVNVVFSLGHRLLNFQSARVTYFVNASLFIYLVHHPLTLFFGAYITPHITSNLIGFLCGLIFVMGIALILYEIHLRIPLLKFLFSGKPPVKQESRAAIG</sequence>
<accession>B4TSR0</accession>